<accession>B3QSU1</accession>
<evidence type="ECO:0000255" key="1">
    <source>
        <dbReference type="HAMAP-Rule" id="MF_00238"/>
    </source>
</evidence>
<keyword id="KW-0067">ATP-binding</keyword>
<keyword id="KW-0963">Cytoplasm</keyword>
<keyword id="KW-0418">Kinase</keyword>
<keyword id="KW-0547">Nucleotide-binding</keyword>
<keyword id="KW-1185">Reference proteome</keyword>
<keyword id="KW-0808">Transferase</keyword>
<sequence>MPEATLTKKIIIAIDGPAASGKSTTAKQLAQKLSYTYIDTGAMYRAVTLKVLRDAFFEKIFSDELFLKKLLSETEVILKGEKVFLDGEEVTKDIRTNEVSSKVSKVSSLPLVREKLVEYQRNMGKARGVVMDGRDIGTIVFPDAELKVFMIADAKERAKRRYAELKAKSPSGDPGVTLETLEQEILQRDEDDRTRAIAPLRKPDDARELDTSKMTIEEQVAAIYELATDVISQLK</sequence>
<feature type="chain" id="PRO_1000100657" description="Cytidylate kinase">
    <location>
        <begin position="1"/>
        <end position="235"/>
    </location>
</feature>
<feature type="binding site" evidence="1">
    <location>
        <begin position="16"/>
        <end position="24"/>
    </location>
    <ligand>
        <name>ATP</name>
        <dbReference type="ChEBI" id="CHEBI:30616"/>
    </ligand>
</feature>
<name>KCY_CHLT3</name>
<reference key="1">
    <citation type="submission" date="2008-06" db="EMBL/GenBank/DDBJ databases">
        <title>Complete sequence of Chloroherpeton thalassium ATCC 35110.</title>
        <authorList>
            <consortium name="US DOE Joint Genome Institute"/>
            <person name="Lucas S."/>
            <person name="Copeland A."/>
            <person name="Lapidus A."/>
            <person name="Glavina del Rio T."/>
            <person name="Dalin E."/>
            <person name="Tice H."/>
            <person name="Bruce D."/>
            <person name="Goodwin L."/>
            <person name="Pitluck S."/>
            <person name="Schmutz J."/>
            <person name="Larimer F."/>
            <person name="Land M."/>
            <person name="Hauser L."/>
            <person name="Kyrpides N."/>
            <person name="Mikhailova N."/>
            <person name="Liu Z."/>
            <person name="Li T."/>
            <person name="Zhao F."/>
            <person name="Overmann J."/>
            <person name="Bryant D.A."/>
            <person name="Richardson P."/>
        </authorList>
    </citation>
    <scope>NUCLEOTIDE SEQUENCE [LARGE SCALE GENOMIC DNA]</scope>
    <source>
        <strain>ATCC 35110 / GB-78</strain>
    </source>
</reference>
<organism>
    <name type="scientific">Chloroherpeton thalassium (strain ATCC 35110 / GB-78)</name>
    <dbReference type="NCBI Taxonomy" id="517418"/>
    <lineage>
        <taxon>Bacteria</taxon>
        <taxon>Pseudomonadati</taxon>
        <taxon>Chlorobiota</taxon>
        <taxon>Chlorobiia</taxon>
        <taxon>Chlorobiales</taxon>
        <taxon>Chloroherpetonaceae</taxon>
        <taxon>Chloroherpeton</taxon>
    </lineage>
</organism>
<proteinExistence type="inferred from homology"/>
<protein>
    <recommendedName>
        <fullName evidence="1">Cytidylate kinase</fullName>
        <shortName evidence="1">CK</shortName>
        <ecNumber evidence="1">2.7.4.25</ecNumber>
    </recommendedName>
    <alternativeName>
        <fullName evidence="1">Cytidine monophosphate kinase</fullName>
        <shortName evidence="1">CMP kinase</shortName>
    </alternativeName>
</protein>
<gene>
    <name evidence="1" type="primary">cmk</name>
    <name type="ordered locus">Ctha_0113</name>
</gene>
<comment type="catalytic activity">
    <reaction evidence="1">
        <text>CMP + ATP = CDP + ADP</text>
        <dbReference type="Rhea" id="RHEA:11600"/>
        <dbReference type="ChEBI" id="CHEBI:30616"/>
        <dbReference type="ChEBI" id="CHEBI:58069"/>
        <dbReference type="ChEBI" id="CHEBI:60377"/>
        <dbReference type="ChEBI" id="CHEBI:456216"/>
        <dbReference type="EC" id="2.7.4.25"/>
    </reaction>
</comment>
<comment type="catalytic activity">
    <reaction evidence="1">
        <text>dCMP + ATP = dCDP + ADP</text>
        <dbReference type="Rhea" id="RHEA:25094"/>
        <dbReference type="ChEBI" id="CHEBI:30616"/>
        <dbReference type="ChEBI" id="CHEBI:57566"/>
        <dbReference type="ChEBI" id="CHEBI:58593"/>
        <dbReference type="ChEBI" id="CHEBI:456216"/>
        <dbReference type="EC" id="2.7.4.25"/>
    </reaction>
</comment>
<comment type="subcellular location">
    <subcellularLocation>
        <location evidence="1">Cytoplasm</location>
    </subcellularLocation>
</comment>
<comment type="similarity">
    <text evidence="1">Belongs to the cytidylate kinase family. Type 1 subfamily.</text>
</comment>
<dbReference type="EC" id="2.7.4.25" evidence="1"/>
<dbReference type="EMBL" id="CP001100">
    <property type="protein sequence ID" value="ACF12584.1"/>
    <property type="molecule type" value="Genomic_DNA"/>
</dbReference>
<dbReference type="RefSeq" id="WP_012498668.1">
    <property type="nucleotide sequence ID" value="NC_011026.1"/>
</dbReference>
<dbReference type="SMR" id="B3QSU1"/>
<dbReference type="STRING" id="517418.Ctha_0113"/>
<dbReference type="KEGG" id="cts:Ctha_0113"/>
<dbReference type="eggNOG" id="COG0283">
    <property type="taxonomic scope" value="Bacteria"/>
</dbReference>
<dbReference type="HOGENOM" id="CLU_079959_0_2_10"/>
<dbReference type="OrthoDB" id="9807434at2"/>
<dbReference type="Proteomes" id="UP000001208">
    <property type="component" value="Chromosome"/>
</dbReference>
<dbReference type="GO" id="GO:0005829">
    <property type="term" value="C:cytosol"/>
    <property type="evidence" value="ECO:0007669"/>
    <property type="project" value="TreeGrafter"/>
</dbReference>
<dbReference type="GO" id="GO:0005524">
    <property type="term" value="F:ATP binding"/>
    <property type="evidence" value="ECO:0007669"/>
    <property type="project" value="UniProtKB-UniRule"/>
</dbReference>
<dbReference type="GO" id="GO:0036430">
    <property type="term" value="F:CMP kinase activity"/>
    <property type="evidence" value="ECO:0007669"/>
    <property type="project" value="RHEA"/>
</dbReference>
<dbReference type="GO" id="GO:0036431">
    <property type="term" value="F:dCMP kinase activity"/>
    <property type="evidence" value="ECO:0007669"/>
    <property type="project" value="RHEA"/>
</dbReference>
<dbReference type="GO" id="GO:0015949">
    <property type="term" value="P:nucleobase-containing small molecule interconversion"/>
    <property type="evidence" value="ECO:0007669"/>
    <property type="project" value="TreeGrafter"/>
</dbReference>
<dbReference type="GO" id="GO:0006220">
    <property type="term" value="P:pyrimidine nucleotide metabolic process"/>
    <property type="evidence" value="ECO:0007669"/>
    <property type="project" value="UniProtKB-UniRule"/>
</dbReference>
<dbReference type="CDD" id="cd02020">
    <property type="entry name" value="CMPK"/>
    <property type="match status" value="1"/>
</dbReference>
<dbReference type="Gene3D" id="3.40.50.300">
    <property type="entry name" value="P-loop containing nucleotide triphosphate hydrolases"/>
    <property type="match status" value="1"/>
</dbReference>
<dbReference type="HAMAP" id="MF_00238">
    <property type="entry name" value="Cytidyl_kinase_type1"/>
    <property type="match status" value="1"/>
</dbReference>
<dbReference type="InterPro" id="IPR003136">
    <property type="entry name" value="Cytidylate_kin"/>
</dbReference>
<dbReference type="InterPro" id="IPR011994">
    <property type="entry name" value="Cytidylate_kinase_dom"/>
</dbReference>
<dbReference type="InterPro" id="IPR027417">
    <property type="entry name" value="P-loop_NTPase"/>
</dbReference>
<dbReference type="NCBIfam" id="TIGR00017">
    <property type="entry name" value="cmk"/>
    <property type="match status" value="1"/>
</dbReference>
<dbReference type="PANTHER" id="PTHR21299:SF2">
    <property type="entry name" value="CYTIDYLATE KINASE"/>
    <property type="match status" value="1"/>
</dbReference>
<dbReference type="PANTHER" id="PTHR21299">
    <property type="entry name" value="CYTIDYLATE KINASE/PANTOATE-BETA-ALANINE LIGASE"/>
    <property type="match status" value="1"/>
</dbReference>
<dbReference type="Pfam" id="PF02224">
    <property type="entry name" value="Cytidylate_kin"/>
    <property type="match status" value="1"/>
</dbReference>
<dbReference type="SUPFAM" id="SSF52540">
    <property type="entry name" value="P-loop containing nucleoside triphosphate hydrolases"/>
    <property type="match status" value="1"/>
</dbReference>